<feature type="chain" id="PRO_1000145252" description="ATP synthase subunit a">
    <location>
        <begin position="1"/>
        <end position="291"/>
    </location>
</feature>
<feature type="transmembrane region" description="Helical" evidence="1">
    <location>
        <begin position="50"/>
        <end position="70"/>
    </location>
</feature>
<feature type="transmembrane region" description="Helical" evidence="1">
    <location>
        <begin position="108"/>
        <end position="128"/>
    </location>
</feature>
<feature type="transmembrane region" description="Helical" evidence="1">
    <location>
        <begin position="129"/>
        <end position="149"/>
    </location>
</feature>
<feature type="transmembrane region" description="Helical" evidence="1">
    <location>
        <begin position="161"/>
        <end position="181"/>
    </location>
</feature>
<feature type="transmembrane region" description="Helical" evidence="1">
    <location>
        <begin position="203"/>
        <end position="223"/>
    </location>
</feature>
<feature type="transmembrane region" description="Helical" evidence="1">
    <location>
        <begin position="241"/>
        <end position="261"/>
    </location>
</feature>
<feature type="transmembrane region" description="Helical" evidence="1">
    <location>
        <begin position="262"/>
        <end position="282"/>
    </location>
</feature>
<protein>
    <recommendedName>
        <fullName evidence="1">ATP synthase subunit a</fullName>
    </recommendedName>
    <alternativeName>
        <fullName evidence="1">ATP synthase F0 sector subunit a</fullName>
    </alternativeName>
    <alternativeName>
        <fullName evidence="1">F-ATPase subunit 6</fullName>
    </alternativeName>
</protein>
<accession>B7I1V8</accession>
<name>ATP6_ACIB5</name>
<gene>
    <name evidence="1" type="primary">atpB</name>
    <name type="ordered locus">AB57_0187</name>
</gene>
<sequence length="291" mass="32443">MAAEEHALTSTEYIKHHLTNMTYGKMPDGTWKLAETAEEAHSMGFTAIHLDSMGWSIGLGVIFCLLFWIVARAANAGVPTKFQSAIEMIIEFVDSSVRDTFHGKSRLIAPLALTIFVWIFLMNLMDLIPVDWIPQVAAFVGANVFGMDPHHVYFKIVPSTDPNITLGMSLSVFVLILFYSIREKGVGGFVGELALNPFNPSNPVAKALLIPVNLILELVTFLARPISLALRLFGNMYAGELIFILIALLPFWIQWALSVPWAIFHILVITLQAFIFMMLTIVYLSMASEKH</sequence>
<evidence type="ECO:0000255" key="1">
    <source>
        <dbReference type="HAMAP-Rule" id="MF_01393"/>
    </source>
</evidence>
<organism>
    <name type="scientific">Acinetobacter baumannii (strain AB0057)</name>
    <dbReference type="NCBI Taxonomy" id="480119"/>
    <lineage>
        <taxon>Bacteria</taxon>
        <taxon>Pseudomonadati</taxon>
        <taxon>Pseudomonadota</taxon>
        <taxon>Gammaproteobacteria</taxon>
        <taxon>Moraxellales</taxon>
        <taxon>Moraxellaceae</taxon>
        <taxon>Acinetobacter</taxon>
        <taxon>Acinetobacter calcoaceticus/baumannii complex</taxon>
    </lineage>
</organism>
<comment type="function">
    <text evidence="1">Key component of the proton channel; it plays a direct role in the translocation of protons across the membrane.</text>
</comment>
<comment type="subunit">
    <text evidence="1">F-type ATPases have 2 components, CF(1) - the catalytic core - and CF(0) - the membrane proton channel. CF(1) has five subunits: alpha(3), beta(3), gamma(1), delta(1), epsilon(1). CF(0) has three main subunits: a(1), b(2) and c(9-12). The alpha and beta chains form an alternating ring which encloses part of the gamma chain. CF(1) is attached to CF(0) by a central stalk formed by the gamma and epsilon chains, while a peripheral stalk is formed by the delta and b chains.</text>
</comment>
<comment type="subcellular location">
    <subcellularLocation>
        <location evidence="1">Cell inner membrane</location>
        <topology evidence="1">Multi-pass membrane protein</topology>
    </subcellularLocation>
</comment>
<comment type="similarity">
    <text evidence="1">Belongs to the ATPase A chain family.</text>
</comment>
<dbReference type="EMBL" id="CP001182">
    <property type="protein sequence ID" value="ACJ39618.1"/>
    <property type="molecule type" value="Genomic_DNA"/>
</dbReference>
<dbReference type="RefSeq" id="WP_000718586.1">
    <property type="nucleotide sequence ID" value="NC_011586.2"/>
</dbReference>
<dbReference type="SMR" id="B7I1V8"/>
<dbReference type="GeneID" id="92892161"/>
<dbReference type="KEGG" id="abn:AB57_0187"/>
<dbReference type="HOGENOM" id="CLU_041018_1_0_6"/>
<dbReference type="Proteomes" id="UP000007094">
    <property type="component" value="Chromosome"/>
</dbReference>
<dbReference type="GO" id="GO:0005886">
    <property type="term" value="C:plasma membrane"/>
    <property type="evidence" value="ECO:0007669"/>
    <property type="project" value="UniProtKB-SubCell"/>
</dbReference>
<dbReference type="GO" id="GO:0045259">
    <property type="term" value="C:proton-transporting ATP synthase complex"/>
    <property type="evidence" value="ECO:0007669"/>
    <property type="project" value="UniProtKB-KW"/>
</dbReference>
<dbReference type="GO" id="GO:0046933">
    <property type="term" value="F:proton-transporting ATP synthase activity, rotational mechanism"/>
    <property type="evidence" value="ECO:0007669"/>
    <property type="project" value="UniProtKB-UniRule"/>
</dbReference>
<dbReference type="GO" id="GO:0042777">
    <property type="term" value="P:proton motive force-driven plasma membrane ATP synthesis"/>
    <property type="evidence" value="ECO:0007669"/>
    <property type="project" value="TreeGrafter"/>
</dbReference>
<dbReference type="CDD" id="cd00310">
    <property type="entry name" value="ATP-synt_Fo_a_6"/>
    <property type="match status" value="1"/>
</dbReference>
<dbReference type="FunFam" id="1.20.120.220:FF:000002">
    <property type="entry name" value="ATP synthase subunit a"/>
    <property type="match status" value="1"/>
</dbReference>
<dbReference type="Gene3D" id="1.20.120.220">
    <property type="entry name" value="ATP synthase, F0 complex, subunit A"/>
    <property type="match status" value="1"/>
</dbReference>
<dbReference type="HAMAP" id="MF_01393">
    <property type="entry name" value="ATP_synth_a_bact"/>
    <property type="match status" value="1"/>
</dbReference>
<dbReference type="InterPro" id="IPR045082">
    <property type="entry name" value="ATP_syn_F0_a_bact/chloroplast"/>
</dbReference>
<dbReference type="InterPro" id="IPR000568">
    <property type="entry name" value="ATP_synth_F0_asu"/>
</dbReference>
<dbReference type="InterPro" id="IPR023011">
    <property type="entry name" value="ATP_synth_F0_asu_AS"/>
</dbReference>
<dbReference type="InterPro" id="IPR035908">
    <property type="entry name" value="F0_ATP_A_sf"/>
</dbReference>
<dbReference type="NCBIfam" id="TIGR01131">
    <property type="entry name" value="ATP_synt_6_or_A"/>
    <property type="match status" value="1"/>
</dbReference>
<dbReference type="NCBIfam" id="NF004477">
    <property type="entry name" value="PRK05815.1-1"/>
    <property type="match status" value="1"/>
</dbReference>
<dbReference type="PANTHER" id="PTHR42823">
    <property type="entry name" value="ATP SYNTHASE SUBUNIT A, CHLOROPLASTIC"/>
    <property type="match status" value="1"/>
</dbReference>
<dbReference type="PANTHER" id="PTHR42823:SF3">
    <property type="entry name" value="ATP SYNTHASE SUBUNIT A, CHLOROPLASTIC"/>
    <property type="match status" value="1"/>
</dbReference>
<dbReference type="Pfam" id="PF00119">
    <property type="entry name" value="ATP-synt_A"/>
    <property type="match status" value="1"/>
</dbReference>
<dbReference type="SUPFAM" id="SSF81336">
    <property type="entry name" value="F1F0 ATP synthase subunit A"/>
    <property type="match status" value="1"/>
</dbReference>
<dbReference type="PROSITE" id="PS00449">
    <property type="entry name" value="ATPASE_A"/>
    <property type="match status" value="1"/>
</dbReference>
<keyword id="KW-0066">ATP synthesis</keyword>
<keyword id="KW-0997">Cell inner membrane</keyword>
<keyword id="KW-1003">Cell membrane</keyword>
<keyword id="KW-0138">CF(0)</keyword>
<keyword id="KW-0375">Hydrogen ion transport</keyword>
<keyword id="KW-0406">Ion transport</keyword>
<keyword id="KW-0472">Membrane</keyword>
<keyword id="KW-0812">Transmembrane</keyword>
<keyword id="KW-1133">Transmembrane helix</keyword>
<keyword id="KW-0813">Transport</keyword>
<proteinExistence type="inferred from homology"/>
<reference key="1">
    <citation type="journal article" date="2008" name="J. Bacteriol.">
        <title>Comparative genome sequence analysis of multidrug-resistant Acinetobacter baumannii.</title>
        <authorList>
            <person name="Adams M.D."/>
            <person name="Goglin K."/>
            <person name="Molyneaux N."/>
            <person name="Hujer K.M."/>
            <person name="Lavender H."/>
            <person name="Jamison J.J."/>
            <person name="MacDonald I.J."/>
            <person name="Martin K.M."/>
            <person name="Russo T."/>
            <person name="Campagnari A.A."/>
            <person name="Hujer A.M."/>
            <person name="Bonomo R.A."/>
            <person name="Gill S.R."/>
        </authorList>
    </citation>
    <scope>NUCLEOTIDE SEQUENCE [LARGE SCALE GENOMIC DNA]</scope>
    <source>
        <strain>AB0057</strain>
    </source>
</reference>